<proteinExistence type="inferred from homology"/>
<organism>
    <name type="scientific">Paraburkholderia xenovorans (strain LB400)</name>
    <dbReference type="NCBI Taxonomy" id="266265"/>
    <lineage>
        <taxon>Bacteria</taxon>
        <taxon>Pseudomonadati</taxon>
        <taxon>Pseudomonadota</taxon>
        <taxon>Betaproteobacteria</taxon>
        <taxon>Burkholderiales</taxon>
        <taxon>Burkholderiaceae</taxon>
        <taxon>Paraburkholderia</taxon>
    </lineage>
</organism>
<sequence>MANSAQARKRARQAAKANSHNSALRSKFRTAIKAVRKAIDAGDKAKAAEIFLASSKTIDIIADKKIVHKNKAARHKSRLAAAIKGLQAPAAQ</sequence>
<keyword id="KW-1185">Reference proteome</keyword>
<keyword id="KW-0687">Ribonucleoprotein</keyword>
<keyword id="KW-0689">Ribosomal protein</keyword>
<keyword id="KW-0694">RNA-binding</keyword>
<keyword id="KW-0699">rRNA-binding</keyword>
<reference key="1">
    <citation type="journal article" date="2006" name="Proc. Natl. Acad. Sci. U.S.A.">
        <title>Burkholderia xenovorans LB400 harbors a multi-replicon, 9.73-Mbp genome shaped for versatility.</title>
        <authorList>
            <person name="Chain P.S.G."/>
            <person name="Denef V.J."/>
            <person name="Konstantinidis K.T."/>
            <person name="Vergez L.M."/>
            <person name="Agullo L."/>
            <person name="Reyes V.L."/>
            <person name="Hauser L."/>
            <person name="Cordova M."/>
            <person name="Gomez L."/>
            <person name="Gonzalez M."/>
            <person name="Land M."/>
            <person name="Lao V."/>
            <person name="Larimer F."/>
            <person name="LiPuma J.J."/>
            <person name="Mahenthiralingam E."/>
            <person name="Malfatti S.A."/>
            <person name="Marx C.J."/>
            <person name="Parnell J.J."/>
            <person name="Ramette A."/>
            <person name="Richardson P."/>
            <person name="Seeger M."/>
            <person name="Smith D."/>
            <person name="Spilker T."/>
            <person name="Sul W.J."/>
            <person name="Tsoi T.V."/>
            <person name="Ulrich L.E."/>
            <person name="Zhulin I.B."/>
            <person name="Tiedje J.M."/>
        </authorList>
    </citation>
    <scope>NUCLEOTIDE SEQUENCE [LARGE SCALE GENOMIC DNA]</scope>
    <source>
        <strain>LB400</strain>
    </source>
</reference>
<gene>
    <name evidence="1" type="primary">rpsT</name>
    <name type="ordered locus">Bxeno_A3637</name>
    <name type="ORF">Bxe_A0759</name>
</gene>
<accession>Q13UR4</accession>
<dbReference type="EMBL" id="CP000270">
    <property type="protein sequence ID" value="ABE32175.1"/>
    <property type="molecule type" value="Genomic_DNA"/>
</dbReference>
<dbReference type="RefSeq" id="WP_007180577.1">
    <property type="nucleotide sequence ID" value="NZ_CP008760.1"/>
</dbReference>
<dbReference type="SMR" id="Q13UR4"/>
<dbReference type="STRING" id="266265.Bxe_A0759"/>
<dbReference type="KEGG" id="bxb:DR64_2927"/>
<dbReference type="KEGG" id="bxe:Bxe_A0759"/>
<dbReference type="eggNOG" id="COG0268">
    <property type="taxonomic scope" value="Bacteria"/>
</dbReference>
<dbReference type="OrthoDB" id="9807974at2"/>
<dbReference type="Proteomes" id="UP000001817">
    <property type="component" value="Chromosome 1"/>
</dbReference>
<dbReference type="GO" id="GO:0005829">
    <property type="term" value="C:cytosol"/>
    <property type="evidence" value="ECO:0007669"/>
    <property type="project" value="TreeGrafter"/>
</dbReference>
<dbReference type="GO" id="GO:0015935">
    <property type="term" value="C:small ribosomal subunit"/>
    <property type="evidence" value="ECO:0007669"/>
    <property type="project" value="TreeGrafter"/>
</dbReference>
<dbReference type="GO" id="GO:0070181">
    <property type="term" value="F:small ribosomal subunit rRNA binding"/>
    <property type="evidence" value="ECO:0007669"/>
    <property type="project" value="TreeGrafter"/>
</dbReference>
<dbReference type="GO" id="GO:0003735">
    <property type="term" value="F:structural constituent of ribosome"/>
    <property type="evidence" value="ECO:0007669"/>
    <property type="project" value="InterPro"/>
</dbReference>
<dbReference type="GO" id="GO:0006412">
    <property type="term" value="P:translation"/>
    <property type="evidence" value="ECO:0007669"/>
    <property type="project" value="UniProtKB-UniRule"/>
</dbReference>
<dbReference type="FunFam" id="1.20.58.110:FF:000001">
    <property type="entry name" value="30S ribosomal protein S20"/>
    <property type="match status" value="1"/>
</dbReference>
<dbReference type="Gene3D" id="1.20.58.110">
    <property type="entry name" value="Ribosomal protein S20"/>
    <property type="match status" value="1"/>
</dbReference>
<dbReference type="HAMAP" id="MF_00500">
    <property type="entry name" value="Ribosomal_bS20"/>
    <property type="match status" value="1"/>
</dbReference>
<dbReference type="InterPro" id="IPR002583">
    <property type="entry name" value="Ribosomal_bS20"/>
</dbReference>
<dbReference type="InterPro" id="IPR036510">
    <property type="entry name" value="Ribosomal_bS20_sf"/>
</dbReference>
<dbReference type="NCBIfam" id="TIGR00029">
    <property type="entry name" value="S20"/>
    <property type="match status" value="1"/>
</dbReference>
<dbReference type="PANTHER" id="PTHR33398">
    <property type="entry name" value="30S RIBOSOMAL PROTEIN S20"/>
    <property type="match status" value="1"/>
</dbReference>
<dbReference type="PANTHER" id="PTHR33398:SF1">
    <property type="entry name" value="SMALL RIBOSOMAL SUBUNIT PROTEIN BS20C"/>
    <property type="match status" value="1"/>
</dbReference>
<dbReference type="Pfam" id="PF01649">
    <property type="entry name" value="Ribosomal_S20p"/>
    <property type="match status" value="1"/>
</dbReference>
<dbReference type="SUPFAM" id="SSF46992">
    <property type="entry name" value="Ribosomal protein S20"/>
    <property type="match status" value="1"/>
</dbReference>
<evidence type="ECO:0000255" key="1">
    <source>
        <dbReference type="HAMAP-Rule" id="MF_00500"/>
    </source>
</evidence>
<evidence type="ECO:0000256" key="2">
    <source>
        <dbReference type="SAM" id="MobiDB-lite"/>
    </source>
</evidence>
<evidence type="ECO:0000305" key="3"/>
<comment type="function">
    <text evidence="1">Binds directly to 16S ribosomal RNA.</text>
</comment>
<comment type="similarity">
    <text evidence="1">Belongs to the bacterial ribosomal protein bS20 family.</text>
</comment>
<protein>
    <recommendedName>
        <fullName evidence="1">Small ribosomal subunit protein bS20</fullName>
    </recommendedName>
    <alternativeName>
        <fullName evidence="3">30S ribosomal protein S20</fullName>
    </alternativeName>
</protein>
<feature type="chain" id="PRO_0000260108" description="Small ribosomal subunit protein bS20">
    <location>
        <begin position="1"/>
        <end position="92"/>
    </location>
</feature>
<feature type="region of interest" description="Disordered" evidence="2">
    <location>
        <begin position="1"/>
        <end position="24"/>
    </location>
</feature>
<name>RS20_PARXL</name>